<reference key="1">
    <citation type="journal article" date="2010" name="J. Bacteriol.">
        <title>Genome sequence of Pantoea ananatis LMG20103, the causative agent of Eucalyptus blight and dieback.</title>
        <authorList>
            <person name="De Maayer P."/>
            <person name="Chan W.Y."/>
            <person name="Venter S.N."/>
            <person name="Toth I.K."/>
            <person name="Birch P.R."/>
            <person name="Joubert F."/>
            <person name="Coutinho T.A."/>
        </authorList>
    </citation>
    <scope>NUCLEOTIDE SEQUENCE [LARGE SCALE GENOMIC DNA]</scope>
    <source>
        <strain>LMG 20103</strain>
    </source>
</reference>
<feature type="chain" id="PRO_0000412745" description="3'-5' ssDNA/RNA exonuclease TatD">
    <location>
        <begin position="1"/>
        <end position="260"/>
    </location>
</feature>
<feature type="binding site" evidence="1">
    <location>
        <position position="92"/>
    </location>
    <ligand>
        <name>a divalent metal cation</name>
        <dbReference type="ChEBI" id="CHEBI:60240"/>
    </ligand>
</feature>
<feature type="binding site" evidence="1">
    <location>
        <position position="128"/>
    </location>
    <ligand>
        <name>a divalent metal cation</name>
        <dbReference type="ChEBI" id="CHEBI:60240"/>
    </ligand>
</feature>
<feature type="binding site" evidence="1">
    <location>
        <position position="153"/>
    </location>
    <ligand>
        <name>a divalent metal cation</name>
        <dbReference type="ChEBI" id="CHEBI:60240"/>
    </ligand>
</feature>
<comment type="function">
    <text evidence="1">3'-5' exonuclease that prefers single-stranded DNA and RNA. May play a role in the H(2)O(2)-induced DNA damage repair.</text>
</comment>
<comment type="cofactor">
    <cofactor evidence="1">
        <name>Mg(2+)</name>
        <dbReference type="ChEBI" id="CHEBI:18420"/>
    </cofactor>
</comment>
<comment type="subunit">
    <text evidence="1">Monomer.</text>
</comment>
<comment type="subcellular location">
    <subcellularLocation>
        <location evidence="1">Cytoplasm</location>
    </subcellularLocation>
</comment>
<comment type="similarity">
    <text evidence="1">Belongs to the metallo-dependent hydrolases superfamily. TatD-type hydrolase family. TatD subfamily.</text>
</comment>
<comment type="sequence caution" evidence="2">
    <conflict type="erroneous initiation">
        <sequence resource="EMBL-CDS" id="ADD75363"/>
    </conflict>
    <text>Extended N-terminus.</text>
</comment>
<sequence>MFDIGVNLTSTQFASDREKVISRAREAGVTGMLITGTNALESQQAQKLAEAHQDYCWSTAGVHPHHASEWSADVANTLRRLAEKKDVVAIGECGLDFNRNLSAHQQQEYAFDAQLALAAELNMPVFLHCREAHERFAAVLEPWLPKLPAAVIHCFTGTREELTACLDMGLSVGITGWVCDERRGIALREMLPLIPAERLLLETDAPYLLPRDMRPRPTSRRNEPCFLPHILQQVANWRGENVEMLARQVDHNARKLFGLI</sequence>
<protein>
    <recommendedName>
        <fullName evidence="1">3'-5' ssDNA/RNA exonuclease TatD</fullName>
        <ecNumber evidence="1">3.1.11.-</ecNumber>
        <ecNumber evidence="1">3.1.13.-</ecNumber>
    </recommendedName>
    <alternativeName>
        <fullName evidence="1">DNase TatD</fullName>
    </alternativeName>
</protein>
<proteinExistence type="inferred from homology"/>
<gene>
    <name evidence="1" type="primary">tatD</name>
    <name type="ordered locus">PANA_0196</name>
</gene>
<organism>
    <name type="scientific">Pantoea ananatis (strain LMG 20103)</name>
    <dbReference type="NCBI Taxonomy" id="706191"/>
    <lineage>
        <taxon>Bacteria</taxon>
        <taxon>Pseudomonadati</taxon>
        <taxon>Pseudomonadota</taxon>
        <taxon>Gammaproteobacteria</taxon>
        <taxon>Enterobacterales</taxon>
        <taxon>Erwiniaceae</taxon>
        <taxon>Pantoea</taxon>
    </lineage>
</organism>
<keyword id="KW-0963">Cytoplasm</keyword>
<keyword id="KW-0269">Exonuclease</keyword>
<keyword id="KW-0378">Hydrolase</keyword>
<keyword id="KW-0460">Magnesium</keyword>
<keyword id="KW-0479">Metal-binding</keyword>
<keyword id="KW-0540">Nuclease</keyword>
<keyword id="KW-1185">Reference proteome</keyword>
<name>TATD_PANAM</name>
<accession>D4GGR2</accession>
<dbReference type="EC" id="3.1.11.-" evidence="1"/>
<dbReference type="EC" id="3.1.13.-" evidence="1"/>
<dbReference type="EMBL" id="CP001875">
    <property type="protein sequence ID" value="ADD75363.1"/>
    <property type="status" value="ALT_INIT"/>
    <property type="molecule type" value="Genomic_DNA"/>
</dbReference>
<dbReference type="RefSeq" id="WP_029570850.1">
    <property type="nucleotide sequence ID" value="NC_013956.2"/>
</dbReference>
<dbReference type="SMR" id="D4GGR2"/>
<dbReference type="STRING" id="706191.PANA_0196"/>
<dbReference type="KEGG" id="pam:PANA_0196"/>
<dbReference type="eggNOG" id="COG0084">
    <property type="taxonomic scope" value="Bacteria"/>
</dbReference>
<dbReference type="HOGENOM" id="CLU_031506_1_2_6"/>
<dbReference type="Proteomes" id="UP000001702">
    <property type="component" value="Chromosome"/>
</dbReference>
<dbReference type="GO" id="GO:0005737">
    <property type="term" value="C:cytoplasm"/>
    <property type="evidence" value="ECO:0007669"/>
    <property type="project" value="UniProtKB-SubCell"/>
</dbReference>
<dbReference type="GO" id="GO:0000175">
    <property type="term" value="F:3'-5'-RNA exonuclease activity"/>
    <property type="evidence" value="ECO:0007669"/>
    <property type="project" value="UniProtKB-UniRule"/>
</dbReference>
<dbReference type="GO" id="GO:0000287">
    <property type="term" value="F:magnesium ion binding"/>
    <property type="evidence" value="ECO:0007669"/>
    <property type="project" value="UniProtKB-UniRule"/>
</dbReference>
<dbReference type="GO" id="GO:0008310">
    <property type="term" value="F:single-stranded DNA 3'-5' DNA exonuclease activity"/>
    <property type="evidence" value="ECO:0007669"/>
    <property type="project" value="UniProtKB-UniRule"/>
</dbReference>
<dbReference type="CDD" id="cd01310">
    <property type="entry name" value="TatD_DNAse"/>
    <property type="match status" value="1"/>
</dbReference>
<dbReference type="FunFam" id="3.20.20.140:FF:000018">
    <property type="entry name" value="3'-5' ssDNA/RNA exonuclease TatD"/>
    <property type="match status" value="1"/>
</dbReference>
<dbReference type="Gene3D" id="3.20.20.140">
    <property type="entry name" value="Metal-dependent hydrolases"/>
    <property type="match status" value="1"/>
</dbReference>
<dbReference type="HAMAP" id="MF_00901">
    <property type="entry name" value="TatD_exonuclease"/>
    <property type="match status" value="1"/>
</dbReference>
<dbReference type="InterPro" id="IPR018228">
    <property type="entry name" value="DNase_TatD-rel_CS"/>
</dbReference>
<dbReference type="InterPro" id="IPR024918">
    <property type="entry name" value="Exonuc_TatD"/>
</dbReference>
<dbReference type="InterPro" id="IPR032466">
    <property type="entry name" value="Metal_Hydrolase"/>
</dbReference>
<dbReference type="InterPro" id="IPR001130">
    <property type="entry name" value="TatD-like"/>
</dbReference>
<dbReference type="InterPro" id="IPR050891">
    <property type="entry name" value="TatD-type_Hydrolase"/>
</dbReference>
<dbReference type="NCBIfam" id="NF007745">
    <property type="entry name" value="PRK10425.1"/>
    <property type="match status" value="1"/>
</dbReference>
<dbReference type="PANTHER" id="PTHR10060:SF15">
    <property type="entry name" value="DEOXYRIBONUCLEASE TATDN1"/>
    <property type="match status" value="1"/>
</dbReference>
<dbReference type="PANTHER" id="PTHR10060">
    <property type="entry name" value="TATD FAMILY DEOXYRIBONUCLEASE"/>
    <property type="match status" value="1"/>
</dbReference>
<dbReference type="Pfam" id="PF01026">
    <property type="entry name" value="TatD_DNase"/>
    <property type="match status" value="1"/>
</dbReference>
<dbReference type="PIRSF" id="PIRSF005902">
    <property type="entry name" value="DNase_TatD"/>
    <property type="match status" value="1"/>
</dbReference>
<dbReference type="SUPFAM" id="SSF51556">
    <property type="entry name" value="Metallo-dependent hydrolases"/>
    <property type="match status" value="1"/>
</dbReference>
<dbReference type="PROSITE" id="PS01090">
    <property type="entry name" value="TATD_2"/>
    <property type="match status" value="1"/>
</dbReference>
<evidence type="ECO:0000255" key="1">
    <source>
        <dbReference type="HAMAP-Rule" id="MF_00901"/>
    </source>
</evidence>
<evidence type="ECO:0000305" key="2"/>